<reference key="1">
    <citation type="journal article" date="2003" name="Mol. Microbiol.">
        <title>Genome-based analysis of virulence genes in a non-biofilm-forming Staphylococcus epidermidis strain (ATCC 12228).</title>
        <authorList>
            <person name="Zhang Y.-Q."/>
            <person name="Ren S.-X."/>
            <person name="Li H.-L."/>
            <person name="Wang Y.-X."/>
            <person name="Fu G."/>
            <person name="Yang J."/>
            <person name="Qin Z.-Q."/>
            <person name="Miao Y.-G."/>
            <person name="Wang W.-Y."/>
            <person name="Chen R.-S."/>
            <person name="Shen Y."/>
            <person name="Chen Z."/>
            <person name="Yuan Z.-H."/>
            <person name="Zhao G.-P."/>
            <person name="Qu D."/>
            <person name="Danchin A."/>
            <person name="Wen Y.-M."/>
        </authorList>
    </citation>
    <scope>NUCLEOTIDE SEQUENCE [LARGE SCALE GENOMIC DNA]</scope>
    <source>
        <strain>ATCC 12228 / FDA PCI 1200</strain>
    </source>
</reference>
<comment type="function">
    <text evidence="1">Iron-storage protein.</text>
</comment>
<comment type="catalytic activity">
    <reaction>
        <text>4 Fe(2+) + O2 + 6 H2O = 4 iron(III) oxide-hydroxide + 12 H(+)</text>
        <dbReference type="Rhea" id="RHEA:11972"/>
        <dbReference type="ChEBI" id="CHEBI:15377"/>
        <dbReference type="ChEBI" id="CHEBI:15378"/>
        <dbReference type="ChEBI" id="CHEBI:15379"/>
        <dbReference type="ChEBI" id="CHEBI:29033"/>
        <dbReference type="ChEBI" id="CHEBI:78619"/>
        <dbReference type="EC" id="1.16.3.2"/>
    </reaction>
</comment>
<comment type="subcellular location">
    <subcellularLocation>
        <location evidence="1">Cytoplasm</location>
    </subcellularLocation>
</comment>
<comment type="similarity">
    <text evidence="3">Belongs to the ferritin family. Prokaryotic subfamily.</text>
</comment>
<proteinExistence type="inferred from homology"/>
<evidence type="ECO:0000250" key="1"/>
<evidence type="ECO:0000255" key="2">
    <source>
        <dbReference type="PROSITE-ProRule" id="PRU00085"/>
    </source>
</evidence>
<evidence type="ECO:0000305" key="3"/>
<organism>
    <name type="scientific">Staphylococcus epidermidis (strain ATCC 12228 / FDA PCI 1200)</name>
    <dbReference type="NCBI Taxonomy" id="176280"/>
    <lineage>
        <taxon>Bacteria</taxon>
        <taxon>Bacillati</taxon>
        <taxon>Bacillota</taxon>
        <taxon>Bacilli</taxon>
        <taxon>Bacillales</taxon>
        <taxon>Staphylococcaceae</taxon>
        <taxon>Staphylococcus</taxon>
    </lineage>
</organism>
<protein>
    <recommendedName>
        <fullName>Bacterial non-heme ferritin</fullName>
        <ecNumber>1.16.3.2</ecNumber>
    </recommendedName>
</protein>
<feature type="initiator methionine" description="Removed" evidence="1">
    <location>
        <position position="1"/>
    </location>
</feature>
<feature type="chain" id="PRO_0000298971" description="Bacterial non-heme ferritin">
    <location>
        <begin position="2"/>
        <end position="166"/>
    </location>
</feature>
<feature type="domain" description="Ferritin-like diiron" evidence="2">
    <location>
        <begin position="2"/>
        <end position="145"/>
    </location>
</feature>
<feature type="binding site" evidence="2">
    <location>
        <position position="17"/>
    </location>
    <ligand>
        <name>Fe cation</name>
        <dbReference type="ChEBI" id="CHEBI:24875"/>
        <label>1</label>
    </ligand>
</feature>
<feature type="binding site" evidence="2">
    <location>
        <position position="50"/>
    </location>
    <ligand>
        <name>Fe cation</name>
        <dbReference type="ChEBI" id="CHEBI:24875"/>
        <label>1</label>
    </ligand>
</feature>
<feature type="binding site" evidence="2">
    <location>
        <position position="50"/>
    </location>
    <ligand>
        <name>Fe cation</name>
        <dbReference type="ChEBI" id="CHEBI:24875"/>
        <label>2</label>
    </ligand>
</feature>
<feature type="binding site" evidence="2">
    <location>
        <position position="53"/>
    </location>
    <ligand>
        <name>Fe cation</name>
        <dbReference type="ChEBI" id="CHEBI:24875"/>
        <label>1</label>
    </ligand>
</feature>
<feature type="binding site" evidence="2">
    <location>
        <position position="94"/>
    </location>
    <ligand>
        <name>Fe cation</name>
        <dbReference type="ChEBI" id="CHEBI:24875"/>
        <label>2</label>
    </ligand>
</feature>
<feature type="binding site" evidence="2">
    <location>
        <position position="127"/>
    </location>
    <ligand>
        <name>Fe cation</name>
        <dbReference type="ChEBI" id="CHEBI:24875"/>
        <label>2</label>
    </ligand>
</feature>
<gene>
    <name type="primary">ftnA</name>
    <name type="ordered locus">SE_1578</name>
</gene>
<dbReference type="EC" id="1.16.3.2"/>
<dbReference type="EMBL" id="AE015929">
    <property type="protein sequence ID" value="AAO05177.1"/>
    <property type="molecule type" value="Genomic_DNA"/>
</dbReference>
<dbReference type="RefSeq" id="NP_765133.1">
    <property type="nucleotide sequence ID" value="NC_004461.1"/>
</dbReference>
<dbReference type="RefSeq" id="WP_001830392.1">
    <property type="nucleotide sequence ID" value="NZ_WBME01000010.1"/>
</dbReference>
<dbReference type="SMR" id="Q8CNP5"/>
<dbReference type="GeneID" id="50018322"/>
<dbReference type="KEGG" id="sep:SE_1578"/>
<dbReference type="PATRIC" id="fig|176280.10.peg.1542"/>
<dbReference type="eggNOG" id="COG1528">
    <property type="taxonomic scope" value="Bacteria"/>
</dbReference>
<dbReference type="HOGENOM" id="CLU_065681_1_2_9"/>
<dbReference type="OrthoDB" id="9801481at2"/>
<dbReference type="Proteomes" id="UP000001411">
    <property type="component" value="Chromosome"/>
</dbReference>
<dbReference type="GO" id="GO:0005829">
    <property type="term" value="C:cytosol"/>
    <property type="evidence" value="ECO:0007669"/>
    <property type="project" value="TreeGrafter"/>
</dbReference>
<dbReference type="GO" id="GO:0008199">
    <property type="term" value="F:ferric iron binding"/>
    <property type="evidence" value="ECO:0007669"/>
    <property type="project" value="InterPro"/>
</dbReference>
<dbReference type="GO" id="GO:0008198">
    <property type="term" value="F:ferrous iron binding"/>
    <property type="evidence" value="ECO:0007669"/>
    <property type="project" value="TreeGrafter"/>
</dbReference>
<dbReference type="GO" id="GO:0004322">
    <property type="term" value="F:ferroxidase activity"/>
    <property type="evidence" value="ECO:0007669"/>
    <property type="project" value="TreeGrafter"/>
</dbReference>
<dbReference type="GO" id="GO:0006879">
    <property type="term" value="P:intracellular iron ion homeostasis"/>
    <property type="evidence" value="ECO:0007669"/>
    <property type="project" value="UniProtKB-KW"/>
</dbReference>
<dbReference type="GO" id="GO:0006826">
    <property type="term" value="P:iron ion transport"/>
    <property type="evidence" value="ECO:0007669"/>
    <property type="project" value="InterPro"/>
</dbReference>
<dbReference type="CDD" id="cd01055">
    <property type="entry name" value="Nonheme_Ferritin"/>
    <property type="match status" value="1"/>
</dbReference>
<dbReference type="FunFam" id="1.20.1260.10:FF:000001">
    <property type="entry name" value="Non-heme ferritin"/>
    <property type="match status" value="1"/>
</dbReference>
<dbReference type="Gene3D" id="1.20.1260.10">
    <property type="match status" value="1"/>
</dbReference>
<dbReference type="InterPro" id="IPR001519">
    <property type="entry name" value="Ferritin"/>
</dbReference>
<dbReference type="InterPro" id="IPR012347">
    <property type="entry name" value="Ferritin-like"/>
</dbReference>
<dbReference type="InterPro" id="IPR009040">
    <property type="entry name" value="Ferritin-like_diiron"/>
</dbReference>
<dbReference type="InterPro" id="IPR009078">
    <property type="entry name" value="Ferritin-like_SF"/>
</dbReference>
<dbReference type="InterPro" id="IPR008331">
    <property type="entry name" value="Ferritin_DPS_dom"/>
</dbReference>
<dbReference type="InterPro" id="IPR041719">
    <property type="entry name" value="Ferritin_prok"/>
</dbReference>
<dbReference type="PANTHER" id="PTHR11431:SF127">
    <property type="entry name" value="BACTERIAL NON-HEME FERRITIN"/>
    <property type="match status" value="1"/>
</dbReference>
<dbReference type="PANTHER" id="PTHR11431">
    <property type="entry name" value="FERRITIN"/>
    <property type="match status" value="1"/>
</dbReference>
<dbReference type="Pfam" id="PF00210">
    <property type="entry name" value="Ferritin"/>
    <property type="match status" value="1"/>
</dbReference>
<dbReference type="SUPFAM" id="SSF47240">
    <property type="entry name" value="Ferritin-like"/>
    <property type="match status" value="1"/>
</dbReference>
<dbReference type="PROSITE" id="PS50905">
    <property type="entry name" value="FERRITIN_LIKE"/>
    <property type="match status" value="1"/>
</dbReference>
<sequence>MLSKELLAALNEQMNQEYFAAHAYMAMAAYCDKESYDGFANFYIEQAKEERFHGKKIYDYINDRGEHAIFDTIKAPKVEFSSILETFKDSLAQERDVTQRFYNLSELARNDKDYATISFLNWFLDEQVEEESTFETHIDYLTRIGDDCNTLYLYEKELAARSFNEQ</sequence>
<accession>Q8CNP5</accession>
<name>FTN_STAES</name>
<keyword id="KW-0963">Cytoplasm</keyword>
<keyword id="KW-0408">Iron</keyword>
<keyword id="KW-0409">Iron storage</keyword>
<keyword id="KW-0479">Metal-binding</keyword>
<keyword id="KW-0560">Oxidoreductase</keyword>